<sequence length="124" mass="13684">MATINQLVRKPRSLKAAKSNVPALEACPQKRGVCTRVYTTTPKKPNSALRKVCRVRLTNGFEVTSYIGGEGHNLQEHSVILIRGGRVKDLPGVRYHTVRGALDCSGVKDRKQSRSKYGVKKPKA</sequence>
<evidence type="ECO:0000250" key="1"/>
<evidence type="ECO:0000255" key="2">
    <source>
        <dbReference type="HAMAP-Rule" id="MF_00403"/>
    </source>
</evidence>
<evidence type="ECO:0000305" key="3"/>
<organism>
    <name type="scientific">Pectobacterium atrosepticum (strain SCRI 1043 / ATCC BAA-672)</name>
    <name type="common">Erwinia carotovora subsp. atroseptica</name>
    <dbReference type="NCBI Taxonomy" id="218491"/>
    <lineage>
        <taxon>Bacteria</taxon>
        <taxon>Pseudomonadati</taxon>
        <taxon>Pseudomonadota</taxon>
        <taxon>Gammaproteobacteria</taxon>
        <taxon>Enterobacterales</taxon>
        <taxon>Pectobacteriaceae</taxon>
        <taxon>Pectobacterium</taxon>
    </lineage>
</organism>
<feature type="chain" id="PRO_0000146225" description="Small ribosomal subunit protein uS12">
    <location>
        <begin position="1"/>
        <end position="124"/>
    </location>
</feature>
<feature type="modified residue" description="3-methylthioaspartic acid" evidence="1">
    <location>
        <position position="89"/>
    </location>
</feature>
<keyword id="KW-0488">Methylation</keyword>
<keyword id="KW-1185">Reference proteome</keyword>
<keyword id="KW-0687">Ribonucleoprotein</keyword>
<keyword id="KW-0689">Ribosomal protein</keyword>
<keyword id="KW-0694">RNA-binding</keyword>
<keyword id="KW-0699">rRNA-binding</keyword>
<keyword id="KW-0820">tRNA-binding</keyword>
<dbReference type="EMBL" id="BX950851">
    <property type="protein sequence ID" value="CAG76935.1"/>
    <property type="molecule type" value="Genomic_DNA"/>
</dbReference>
<dbReference type="RefSeq" id="WP_005969567.1">
    <property type="nucleotide sequence ID" value="NC_004547.2"/>
</dbReference>
<dbReference type="SMR" id="Q6CZW3"/>
<dbReference type="STRING" id="218491.ECA4038"/>
<dbReference type="GeneID" id="93391987"/>
<dbReference type="KEGG" id="eca:ECA4038"/>
<dbReference type="eggNOG" id="COG0048">
    <property type="taxonomic scope" value="Bacteria"/>
</dbReference>
<dbReference type="HOGENOM" id="CLU_104295_1_2_6"/>
<dbReference type="OrthoDB" id="9802366at2"/>
<dbReference type="Proteomes" id="UP000007966">
    <property type="component" value="Chromosome"/>
</dbReference>
<dbReference type="GO" id="GO:0015935">
    <property type="term" value="C:small ribosomal subunit"/>
    <property type="evidence" value="ECO:0007669"/>
    <property type="project" value="InterPro"/>
</dbReference>
<dbReference type="GO" id="GO:0019843">
    <property type="term" value="F:rRNA binding"/>
    <property type="evidence" value="ECO:0007669"/>
    <property type="project" value="UniProtKB-UniRule"/>
</dbReference>
<dbReference type="GO" id="GO:0003735">
    <property type="term" value="F:structural constituent of ribosome"/>
    <property type="evidence" value="ECO:0007669"/>
    <property type="project" value="InterPro"/>
</dbReference>
<dbReference type="GO" id="GO:0000049">
    <property type="term" value="F:tRNA binding"/>
    <property type="evidence" value="ECO:0007669"/>
    <property type="project" value="UniProtKB-UniRule"/>
</dbReference>
<dbReference type="GO" id="GO:0006412">
    <property type="term" value="P:translation"/>
    <property type="evidence" value="ECO:0007669"/>
    <property type="project" value="UniProtKB-UniRule"/>
</dbReference>
<dbReference type="CDD" id="cd03368">
    <property type="entry name" value="Ribosomal_S12"/>
    <property type="match status" value="1"/>
</dbReference>
<dbReference type="FunFam" id="2.40.50.140:FF:000001">
    <property type="entry name" value="30S ribosomal protein S12"/>
    <property type="match status" value="1"/>
</dbReference>
<dbReference type="Gene3D" id="2.40.50.140">
    <property type="entry name" value="Nucleic acid-binding proteins"/>
    <property type="match status" value="1"/>
</dbReference>
<dbReference type="HAMAP" id="MF_00403_B">
    <property type="entry name" value="Ribosomal_uS12_B"/>
    <property type="match status" value="1"/>
</dbReference>
<dbReference type="InterPro" id="IPR012340">
    <property type="entry name" value="NA-bd_OB-fold"/>
</dbReference>
<dbReference type="InterPro" id="IPR006032">
    <property type="entry name" value="Ribosomal_uS12"/>
</dbReference>
<dbReference type="InterPro" id="IPR005679">
    <property type="entry name" value="Ribosomal_uS12_bac"/>
</dbReference>
<dbReference type="NCBIfam" id="TIGR00981">
    <property type="entry name" value="rpsL_bact"/>
    <property type="match status" value="1"/>
</dbReference>
<dbReference type="PANTHER" id="PTHR11652">
    <property type="entry name" value="30S RIBOSOMAL PROTEIN S12 FAMILY MEMBER"/>
    <property type="match status" value="1"/>
</dbReference>
<dbReference type="Pfam" id="PF00164">
    <property type="entry name" value="Ribosom_S12_S23"/>
    <property type="match status" value="1"/>
</dbReference>
<dbReference type="PIRSF" id="PIRSF002133">
    <property type="entry name" value="Ribosomal_S12/S23"/>
    <property type="match status" value="1"/>
</dbReference>
<dbReference type="PRINTS" id="PR01034">
    <property type="entry name" value="RIBOSOMALS12"/>
</dbReference>
<dbReference type="SUPFAM" id="SSF50249">
    <property type="entry name" value="Nucleic acid-binding proteins"/>
    <property type="match status" value="1"/>
</dbReference>
<dbReference type="PROSITE" id="PS00055">
    <property type="entry name" value="RIBOSOMAL_S12"/>
    <property type="match status" value="1"/>
</dbReference>
<comment type="function">
    <text evidence="2">With S4 and S5 plays an important role in translational accuracy.</text>
</comment>
<comment type="function">
    <text evidence="2">Interacts with and stabilizes bases of the 16S rRNA that are involved in tRNA selection in the A site and with the mRNA backbone. Located at the interface of the 30S and 50S subunits, it traverses the body of the 30S subunit contacting proteins on the other side and probably holding the rRNA structure together. The combined cluster of proteins S8, S12 and S17 appears to hold together the shoulder and platform of the 30S subunit.</text>
</comment>
<comment type="subunit">
    <text evidence="2">Part of the 30S ribosomal subunit. Contacts proteins S8 and S17. May interact with IF1 in the 30S initiation complex.</text>
</comment>
<comment type="similarity">
    <text evidence="2">Belongs to the universal ribosomal protein uS12 family.</text>
</comment>
<gene>
    <name evidence="2" type="primary">rpsL</name>
    <name type="ordered locus">ECA4038</name>
</gene>
<proteinExistence type="inferred from homology"/>
<reference key="1">
    <citation type="journal article" date="2004" name="Proc. Natl. Acad. Sci. U.S.A.">
        <title>Genome sequence of the enterobacterial phytopathogen Erwinia carotovora subsp. atroseptica and characterization of virulence factors.</title>
        <authorList>
            <person name="Bell K.S."/>
            <person name="Sebaihia M."/>
            <person name="Pritchard L."/>
            <person name="Holden M.T.G."/>
            <person name="Hyman L.J."/>
            <person name="Holeva M.C."/>
            <person name="Thomson N.R."/>
            <person name="Bentley S.D."/>
            <person name="Churcher L.J.C."/>
            <person name="Mungall K."/>
            <person name="Atkin R."/>
            <person name="Bason N."/>
            <person name="Brooks K."/>
            <person name="Chillingworth T."/>
            <person name="Clark K."/>
            <person name="Doggett J."/>
            <person name="Fraser A."/>
            <person name="Hance Z."/>
            <person name="Hauser H."/>
            <person name="Jagels K."/>
            <person name="Moule S."/>
            <person name="Norbertczak H."/>
            <person name="Ormond D."/>
            <person name="Price C."/>
            <person name="Quail M.A."/>
            <person name="Sanders M."/>
            <person name="Walker D."/>
            <person name="Whitehead S."/>
            <person name="Salmond G.P.C."/>
            <person name="Birch P.R.J."/>
            <person name="Parkhill J."/>
            <person name="Toth I.K."/>
        </authorList>
    </citation>
    <scope>NUCLEOTIDE SEQUENCE [LARGE SCALE GENOMIC DNA]</scope>
    <source>
        <strain>SCRI 1043 / ATCC BAA-672</strain>
    </source>
</reference>
<name>RS12_PECAS</name>
<protein>
    <recommendedName>
        <fullName evidence="2">Small ribosomal subunit protein uS12</fullName>
    </recommendedName>
    <alternativeName>
        <fullName evidence="3">30S ribosomal protein S12</fullName>
    </alternativeName>
</protein>
<accession>Q6CZW3</accession>